<proteinExistence type="evidence at protein level"/>
<accession>O07838</accession>
<evidence type="ECO:0000255" key="1"/>
<evidence type="ECO:0000269" key="2">
    <source>
    </source>
</evidence>
<evidence type="ECO:0000303" key="3">
    <source>
    </source>
</evidence>
<evidence type="ECO:0000305" key="4"/>
<comment type="function">
    <text evidence="2">Part of the tripartite ATP-independent periplasmic (TRAP) transport system DctPQM involved in C4-dicarboxylates uptake.</text>
</comment>
<comment type="subunit">
    <text evidence="2">The complex comprises the extracytoplasmic solute receptor protein DctP, and the two transmembrane proteins DctQ and DctM.</text>
</comment>
<comment type="subcellular location">
    <subcellularLocation>
        <location evidence="2">Cell inner membrane</location>
        <topology evidence="1">Multi-pass membrane protein</topology>
    </subcellularLocation>
</comment>
<comment type="disruption phenotype">
    <text evidence="2">Deletion mutant is unable to transport succinate, and does not grow on D-malate, L-malate, succinate or fumarate as the sole carbon source under aerobic conditions in the dark.</text>
</comment>
<comment type="similarity">
    <text evidence="4">Belongs to the TRAP transporter large permease family.</text>
</comment>
<reference key="1">
    <citation type="journal article" date="1997" name="J. Bacteriol.">
        <title>TRAP transporters: a new family of periplasmic solute transport systems encoded by the dctPQM genes of Rhodobacter capsulatus and by homologs in diverse gram-negative bacteria.</title>
        <authorList>
            <person name="Forward J.A."/>
            <person name="Behrendt M.C."/>
            <person name="Wyborn N.R."/>
            <person name="Cross R."/>
            <person name="Kelly D.J."/>
        </authorList>
    </citation>
    <scope>NUCLEOTIDE SEQUENCE [GENOMIC DNA]</scope>
    <scope>FUNCTION</scope>
    <scope>SUBUNIT</scope>
    <scope>SUBCELLULAR LOCATION</scope>
    <scope>DISRUPTION PHENOTYPE</scope>
    <scope>NOMENCLATURE</scope>
    <source>
        <strain>ATCC 33303 / B10</strain>
    </source>
</reference>
<name>DCTM_RHOCA</name>
<feature type="chain" id="PRO_0000435379" description="C4-dicarboxylate TRAP transporter large permease protein DctM">
    <location>
        <begin position="1"/>
        <end position="440"/>
    </location>
</feature>
<feature type="transmembrane region" description="Helical" evidence="1">
    <location>
        <begin position="4"/>
        <end position="24"/>
    </location>
</feature>
<feature type="transmembrane region" description="Helical" evidence="1">
    <location>
        <begin position="54"/>
        <end position="74"/>
    </location>
</feature>
<feature type="transmembrane region" description="Helical" evidence="1">
    <location>
        <begin position="89"/>
        <end position="109"/>
    </location>
</feature>
<feature type="transmembrane region" description="Helical" evidence="1">
    <location>
        <begin position="112"/>
        <end position="132"/>
    </location>
</feature>
<feature type="transmembrane region" description="Helical" evidence="1">
    <location>
        <begin position="148"/>
        <end position="168"/>
    </location>
</feature>
<feature type="transmembrane region" description="Helical" evidence="1">
    <location>
        <begin position="181"/>
        <end position="201"/>
    </location>
</feature>
<feature type="transmembrane region" description="Helical" evidence="1">
    <location>
        <begin position="230"/>
        <end position="250"/>
    </location>
</feature>
<feature type="transmembrane region" description="Helical" evidence="1">
    <location>
        <begin position="255"/>
        <end position="275"/>
    </location>
</feature>
<feature type="transmembrane region" description="Helical" evidence="1">
    <location>
        <begin position="291"/>
        <end position="311"/>
    </location>
</feature>
<feature type="transmembrane region" description="Helical" evidence="1">
    <location>
        <begin position="318"/>
        <end position="338"/>
    </location>
</feature>
<feature type="transmembrane region" description="Helical" evidence="1">
    <location>
        <begin position="349"/>
        <end position="369"/>
    </location>
</feature>
<feature type="transmembrane region" description="Helical" evidence="1">
    <location>
        <begin position="370"/>
        <end position="390"/>
    </location>
</feature>
<feature type="transmembrane region" description="Helical" evidence="1">
    <location>
        <begin position="410"/>
        <end position="430"/>
    </location>
</feature>
<dbReference type="EMBL" id="X63974">
    <property type="protein sequence ID" value="CAA45387.1"/>
    <property type="molecule type" value="Genomic_DNA"/>
</dbReference>
<dbReference type="PIR" id="S19739">
    <property type="entry name" value="S19739"/>
</dbReference>
<dbReference type="RefSeq" id="WP_013068719.1">
    <property type="nucleotide sequence ID" value="NZ_VIBE01000005.1"/>
</dbReference>
<dbReference type="SMR" id="O07838"/>
<dbReference type="TCDB" id="2.A.56.1.1">
    <property type="family name" value="the tripartite atp-independent periplasmic transporter (trap-t) family"/>
</dbReference>
<dbReference type="OMA" id="LIVGCMM"/>
<dbReference type="GO" id="GO:0016020">
    <property type="term" value="C:membrane"/>
    <property type="evidence" value="ECO:0000314"/>
    <property type="project" value="CACAO"/>
</dbReference>
<dbReference type="GO" id="GO:0005886">
    <property type="term" value="C:plasma membrane"/>
    <property type="evidence" value="ECO:0007669"/>
    <property type="project" value="UniProtKB-SubCell"/>
</dbReference>
<dbReference type="GO" id="GO:0022857">
    <property type="term" value="F:transmembrane transporter activity"/>
    <property type="evidence" value="ECO:0007669"/>
    <property type="project" value="TreeGrafter"/>
</dbReference>
<dbReference type="InterPro" id="IPR010656">
    <property type="entry name" value="DctM"/>
</dbReference>
<dbReference type="InterPro" id="IPR004681">
    <property type="entry name" value="TRAP_DctM"/>
</dbReference>
<dbReference type="NCBIfam" id="TIGR00786">
    <property type="entry name" value="dctM"/>
    <property type="match status" value="1"/>
</dbReference>
<dbReference type="PANTHER" id="PTHR33362:SF5">
    <property type="entry name" value="C4-DICARBOXYLATE TRAP TRANSPORTER LARGE PERMEASE PROTEIN DCTM"/>
    <property type="match status" value="1"/>
</dbReference>
<dbReference type="PANTHER" id="PTHR33362">
    <property type="entry name" value="SIALIC ACID TRAP TRANSPORTER PERMEASE PROTEIN SIAT-RELATED"/>
    <property type="match status" value="1"/>
</dbReference>
<dbReference type="Pfam" id="PF06808">
    <property type="entry name" value="DctM"/>
    <property type="match status" value="1"/>
</dbReference>
<dbReference type="PIRSF" id="PIRSF006066">
    <property type="entry name" value="HI0050"/>
    <property type="match status" value="1"/>
</dbReference>
<protein>
    <recommendedName>
        <fullName evidence="4">C4-dicarboxylate TRAP transporter large permease protein DctM</fullName>
    </recommendedName>
</protein>
<keyword id="KW-0997">Cell inner membrane</keyword>
<keyword id="KW-1003">Cell membrane</keyword>
<keyword id="KW-0472">Membrane</keyword>
<keyword id="KW-0812">Transmembrane</keyword>
<keyword id="KW-1133">Transmembrane helix</keyword>
<keyword id="KW-0813">Transport</keyword>
<sequence>MSALIIFGLLIALMLTGMPISISLGLTVLTFLFTMTQVPIDTVALKLFTGIEKFEIMAIPFFILAGNFLTHGGVAKRMINFATAMVGHWHGGLGLAGVIACALFAAVSGSSPATVVAIGSVILPAMVNQGFPKQFGAGVITTSGALGILIPPSIVMVMYAVATSGMVVTGPDGQPVSSASVGELFMAGVVPGLMLAGFLAFTTWNRARKFGYPRLEKASLRQRWTAFREAAWGLMLIVVVIGGIYAGIFTPTEAAAMSAVYAFFISVFVYKDLTLRDVPRVLLSSANMSAMLLYIITNAVLFSFLMAHEGIPQALGEWMVNAGLSWWMFLIIVNILLLAAGNFMEPSSIVLIMAPILFPVAVRLGIDPVHFGIMIVVNMEVGMCHPPVGLNLYVASGITKMGITELTVAVWPWLLTMLAFLVLVTYVPAISLALPNLLGM</sequence>
<organism>
    <name type="scientific">Rhodobacter capsulatus</name>
    <name type="common">Rhodopseudomonas capsulata</name>
    <dbReference type="NCBI Taxonomy" id="1061"/>
    <lineage>
        <taxon>Bacteria</taxon>
        <taxon>Pseudomonadati</taxon>
        <taxon>Pseudomonadota</taxon>
        <taxon>Alphaproteobacteria</taxon>
        <taxon>Rhodobacterales</taxon>
        <taxon>Rhodobacter group</taxon>
        <taxon>Rhodobacter</taxon>
    </lineage>
</organism>
<gene>
    <name evidence="3" type="primary">dctM</name>
</gene>